<feature type="chain" id="PRO_0000257848" description="Aquaporin-4">
    <location>
        <begin position="1"/>
        <end position="326"/>
    </location>
</feature>
<feature type="topological domain" description="Cytoplasmic" evidence="6">
    <location>
        <begin position="1"/>
        <end position="39"/>
    </location>
</feature>
<feature type="transmembrane region" description="Helical" evidence="3">
    <location>
        <begin position="40"/>
        <end position="60"/>
    </location>
</feature>
<feature type="topological domain" description="Extracellular" evidence="6">
    <location>
        <begin position="61"/>
        <end position="72"/>
    </location>
</feature>
<feature type="transmembrane region" description="Helical" evidence="3">
    <location>
        <begin position="73"/>
        <end position="92"/>
    </location>
</feature>
<feature type="topological domain" description="Cytoplasmic" evidence="6">
    <location>
        <begin position="93"/>
        <end position="96"/>
    </location>
</feature>
<feature type="intramembrane region" description="Discontinuously helical" evidence="3">
    <location>
        <begin position="97"/>
        <end position="104"/>
    </location>
</feature>
<feature type="topological domain" description="Cytoplasmic" evidence="6">
    <location>
        <begin position="105"/>
        <end position="118"/>
    </location>
</feature>
<feature type="transmembrane region" description="Helical" evidence="3">
    <location>
        <begin position="119"/>
        <end position="139"/>
    </location>
</feature>
<feature type="topological domain" description="Extracellular" evidence="6">
    <location>
        <begin position="140"/>
        <end position="158"/>
    </location>
</feature>
<feature type="transmembrane region" description="Helical" evidence="3">
    <location>
        <begin position="159"/>
        <end position="179"/>
    </location>
</feature>
<feature type="topological domain" description="Cytoplasmic" evidence="6">
    <location>
        <begin position="180"/>
        <end position="187"/>
    </location>
</feature>
<feature type="transmembrane region" description="Helical" evidence="3">
    <location>
        <begin position="188"/>
        <end position="208"/>
    </location>
</feature>
<feature type="topological domain" description="Extracellular" evidence="6">
    <location>
        <begin position="209"/>
        <end position="211"/>
    </location>
</feature>
<feature type="intramembrane region" description="Discontinuously helical" evidence="3">
    <location>
        <begin position="212"/>
        <end position="225"/>
    </location>
</feature>
<feature type="topological domain" description="Extracellular" evidence="6">
    <location>
        <begin position="226"/>
        <end position="234"/>
    </location>
</feature>
<feature type="transmembrane region" description="Helical" evidence="3">
    <location>
        <begin position="235"/>
        <end position="255"/>
    </location>
</feature>
<feature type="topological domain" description="Cytoplasmic" evidence="6">
    <location>
        <begin position="256"/>
        <end position="326"/>
    </location>
</feature>
<feature type="short sequence motif" description="NPA 1" evidence="3">
    <location>
        <begin position="100"/>
        <end position="102"/>
    </location>
</feature>
<feature type="short sequence motif" description="NPA 2" evidence="3">
    <location>
        <begin position="216"/>
        <end position="218"/>
    </location>
</feature>
<feature type="modified residue" description="Phosphoserine; by PKG" evidence="4">
    <location>
        <position position="114"/>
    </location>
</feature>
<feature type="modified residue" description="Phosphoserine; by PKC" evidence="2">
    <location>
        <position position="183"/>
    </location>
</feature>
<feature type="modified residue" description="Phosphoserine" evidence="2">
    <location>
        <position position="279"/>
    </location>
</feature>
<feature type="modified residue" description="Phosphoserine" evidence="4">
    <location>
        <position position="288"/>
    </location>
</feature>
<feature type="modified residue" description="Phosphothreonine" evidence="4">
    <location>
        <position position="292"/>
    </location>
</feature>
<feature type="modified residue" description="Phosphoserine" evidence="2">
    <location>
        <position position="324"/>
    </location>
</feature>
<feature type="lipid moiety-binding region" description="S-palmitoyl cysteine" evidence="2">
    <location>
        <position position="15"/>
    </location>
</feature>
<feature type="lipid moiety-binding region" description="S-palmitoyl cysteine" evidence="2">
    <location>
        <position position="20"/>
    </location>
</feature>
<feature type="glycosylation site" description="N-linked (GlcNAc...) asparagine" evidence="5">
    <location>
        <position position="156"/>
    </location>
</feature>
<feature type="glycosylation site" description="N-linked (GlcNAc...) asparagine" evidence="5">
    <location>
        <position position="209"/>
    </location>
</feature>
<keyword id="KW-1003">Cell membrane</keyword>
<keyword id="KW-0966">Cell projection</keyword>
<keyword id="KW-0967">Endosome</keyword>
<keyword id="KW-0325">Glycoprotein</keyword>
<keyword id="KW-0449">Lipoprotein</keyword>
<keyword id="KW-0472">Membrane</keyword>
<keyword id="KW-0564">Palmitate</keyword>
<keyword id="KW-0597">Phosphoprotein</keyword>
<keyword id="KW-0677">Repeat</keyword>
<keyword id="KW-0812">Transmembrane</keyword>
<keyword id="KW-1133">Transmembrane helix</keyword>
<keyword id="KW-0813">Transport</keyword>
<evidence type="ECO:0000250" key="1"/>
<evidence type="ECO:0000250" key="2">
    <source>
        <dbReference type="UniProtKB" id="P47863"/>
    </source>
</evidence>
<evidence type="ECO:0000250" key="3">
    <source>
        <dbReference type="UniProtKB" id="P55087"/>
    </source>
</evidence>
<evidence type="ECO:0000250" key="4">
    <source>
        <dbReference type="UniProtKB" id="P55088"/>
    </source>
</evidence>
<evidence type="ECO:0000255" key="5"/>
<evidence type="ECO:0000305" key="6"/>
<reference key="1">
    <citation type="submission" date="2004-12" db="EMBL/GenBank/DDBJ databases">
        <title>Cloning and expression of aquaporin 4 in the Spinifex hopping mouse, Notomys alexis.</title>
        <authorList>
            <person name="Bartolo R.C."/>
            <person name="Donald J.A."/>
        </authorList>
    </citation>
    <scope>NUCLEOTIDE SEQUENCE [MRNA]</scope>
</reference>
<proteinExistence type="evidence at transcript level"/>
<gene>
    <name type="primary">AQP4</name>
</gene>
<protein>
    <recommendedName>
        <fullName>Aquaporin-4</fullName>
        <shortName>AQP-4</shortName>
    </recommendedName>
</protein>
<sequence>MSDGAGAAARRWGKCGGRSCSRESIMVAFKGVWTQAFWKAVTAEFLAMLIFVLLSVGSTINWGGSENPLPVDMVLISLCFGLSIATMVQCFGHISGGHINPAVTVAMVCTRKISIAKSVFYITAQCLGAIIGAGILYLVTPPNVVGGLGVTTVHGNLTAGHGLLVELIITFQLVFTIFASCDSKRTDVTGSIALAIGFSVAIGHLFAINYTGASMNPARSFGPAVIMGNWENHWIYWVGPIIGAVLAGALYEYVFCPDVELKRRLKEAFSKAAQQTKGSYTEVEDNRSQVETEDLILKPGVVHVIDIDRGEDKKGKDSAGEVLSSV</sequence>
<comment type="function">
    <text evidence="4">Forms a water-specific channel. Plays an important role in brain water homeostasis and in glymphatic solute transport. Required for a normal rate of water exchange across the blood brain interface. Required for normal levels of cerebrospinal fluid influx into the brain cortex and parenchyma along paravascular spaces that surround penetrating arteries, and for normal drainage of interstitial fluid along paravenous drainage pathways. Thereby, it is required for normal clearance of solutes from the brain interstitial fluid, including soluble beta-amyloid peptides derived from APP. Plays a redundant role in urinary water homeostasis and urinary concentrating ability.</text>
</comment>
<comment type="catalytic activity">
    <reaction evidence="3">
        <text>H2O(in) = H2O(out)</text>
        <dbReference type="Rhea" id="RHEA:29667"/>
        <dbReference type="ChEBI" id="CHEBI:15377"/>
    </reaction>
</comment>
<comment type="subunit">
    <text evidence="2 3">Homotetramer. The tetramers can form oligomeric arrays in membranes. The size of the oligomers differs between tissues and is smaller in skeletal muscle than in brain. Interaction between AQP4 oligomeric arrays in close-by cells can contribute to cell-cell adhesion (By similarity). Part of a complex containing MLC1, TRPV4, HEPACAM and ATP1B1 (By similarity).</text>
</comment>
<comment type="subcellular location">
    <subcellularLocation>
        <location evidence="4">Cell membrane</location>
        <topology evidence="3">Multi-pass membrane protein</topology>
    </subcellularLocation>
    <subcellularLocation>
        <location evidence="4">Basolateral cell membrane</location>
        <topology evidence="3">Multi-pass membrane protein</topology>
    </subcellularLocation>
    <subcellularLocation>
        <location evidence="2">Endosome membrane</location>
    </subcellularLocation>
    <subcellularLocation>
        <location evidence="4">Cell membrane</location>
        <location evidence="4">Sarcolemma</location>
        <topology evidence="3">Multi-pass membrane protein</topology>
    </subcellularLocation>
    <subcellularLocation>
        <location evidence="4">Cell projection</location>
    </subcellularLocation>
    <text evidence="2 4">Activation of the vasopressin receptor AVPR1A triggers AQP4 phosphorylation at Ser-183 and promotes its internalization from the cell membrane (By similarity). Detected on brain astrocyte processes and astrocyte endfeet close to capillaries (By similarity).</text>
</comment>
<comment type="domain">
    <text evidence="3">Aquaporins contain two tandem repeats each containing three membrane-spanning domains and a pore-forming loop with the signature motif Asn-Pro-Ala (NPA).</text>
</comment>
<comment type="PTM">
    <text evidence="1">Phosphorylation by PKC at Ser-183 reduces conductance by 50%. Phosphorylation by PKG at Ser-114 in response to glutamate increases conductance by 40% (By similarity).</text>
</comment>
<comment type="PTM">
    <text evidence="2">Isoform Long: Palmitoylated on its N-terminal region.</text>
</comment>
<comment type="similarity">
    <text evidence="6">Belongs to the MIP/aquaporin (TC 1.A.8) family.</text>
</comment>
<dbReference type="EMBL" id="AY856056">
    <property type="protein sequence ID" value="AAW47638.1"/>
    <property type="molecule type" value="mRNA"/>
</dbReference>
<dbReference type="SMR" id="Q5I4F9"/>
<dbReference type="GlyCosmos" id="Q5I4F9">
    <property type="glycosylation" value="2 sites, No reported glycans"/>
</dbReference>
<dbReference type="GO" id="GO:0097450">
    <property type="term" value="C:astrocyte end-foot"/>
    <property type="evidence" value="ECO:0000250"/>
    <property type="project" value="UniProtKB"/>
</dbReference>
<dbReference type="GO" id="GO:0016323">
    <property type="term" value="C:basolateral plasma membrane"/>
    <property type="evidence" value="ECO:0000250"/>
    <property type="project" value="UniProtKB"/>
</dbReference>
<dbReference type="GO" id="GO:0010008">
    <property type="term" value="C:endosome membrane"/>
    <property type="evidence" value="ECO:0007669"/>
    <property type="project" value="UniProtKB-SubCell"/>
</dbReference>
<dbReference type="GO" id="GO:0005576">
    <property type="term" value="C:extracellular region"/>
    <property type="evidence" value="ECO:0007669"/>
    <property type="project" value="GOC"/>
</dbReference>
<dbReference type="GO" id="GO:0005886">
    <property type="term" value="C:plasma membrane"/>
    <property type="evidence" value="ECO:0000250"/>
    <property type="project" value="UniProtKB"/>
</dbReference>
<dbReference type="GO" id="GO:0042383">
    <property type="term" value="C:sarcolemma"/>
    <property type="evidence" value="ECO:0000250"/>
    <property type="project" value="UniProtKB"/>
</dbReference>
<dbReference type="GO" id="GO:0015250">
    <property type="term" value="F:water channel activity"/>
    <property type="evidence" value="ECO:0000250"/>
    <property type="project" value="UniProtKB"/>
</dbReference>
<dbReference type="GO" id="GO:0090660">
    <property type="term" value="P:cerebrospinal fluid circulation"/>
    <property type="evidence" value="ECO:0000250"/>
    <property type="project" value="UniProtKB"/>
</dbReference>
<dbReference type="GO" id="GO:0009992">
    <property type="term" value="P:intracellular water homeostasis"/>
    <property type="evidence" value="ECO:0000250"/>
    <property type="project" value="UniProtKB"/>
</dbReference>
<dbReference type="GO" id="GO:0050891">
    <property type="term" value="P:multicellular organismal-level water homeostasis"/>
    <property type="evidence" value="ECO:0000250"/>
    <property type="project" value="UniProtKB"/>
</dbReference>
<dbReference type="GO" id="GO:0051289">
    <property type="term" value="P:protein homotetramerization"/>
    <property type="evidence" value="ECO:0000250"/>
    <property type="project" value="UniProtKB"/>
</dbReference>
<dbReference type="GO" id="GO:0006833">
    <property type="term" value="P:water transport"/>
    <property type="evidence" value="ECO:0000250"/>
    <property type="project" value="UniProtKB"/>
</dbReference>
<dbReference type="CDD" id="cd00333">
    <property type="entry name" value="MIP"/>
    <property type="match status" value="1"/>
</dbReference>
<dbReference type="FunFam" id="1.20.1080.10:FF:000009">
    <property type="entry name" value="aquaporin-4 isoform X1"/>
    <property type="match status" value="1"/>
</dbReference>
<dbReference type="Gene3D" id="1.20.1080.10">
    <property type="entry name" value="Glycerol uptake facilitator protein"/>
    <property type="match status" value="1"/>
</dbReference>
<dbReference type="InterPro" id="IPR023271">
    <property type="entry name" value="Aquaporin-like"/>
</dbReference>
<dbReference type="InterPro" id="IPR034294">
    <property type="entry name" value="Aquaporin_transptr"/>
</dbReference>
<dbReference type="InterPro" id="IPR000425">
    <property type="entry name" value="MIP"/>
</dbReference>
<dbReference type="InterPro" id="IPR022357">
    <property type="entry name" value="MIP_CS"/>
</dbReference>
<dbReference type="NCBIfam" id="TIGR00861">
    <property type="entry name" value="MIP"/>
    <property type="match status" value="1"/>
</dbReference>
<dbReference type="PANTHER" id="PTHR19139">
    <property type="entry name" value="AQUAPORIN TRANSPORTER"/>
    <property type="match status" value="1"/>
</dbReference>
<dbReference type="PANTHER" id="PTHR19139:SF34">
    <property type="entry name" value="AQUAPORIN-4"/>
    <property type="match status" value="1"/>
</dbReference>
<dbReference type="Pfam" id="PF00230">
    <property type="entry name" value="MIP"/>
    <property type="match status" value="1"/>
</dbReference>
<dbReference type="PRINTS" id="PR02016">
    <property type="entry name" value="AQUAPORIN4"/>
</dbReference>
<dbReference type="PRINTS" id="PR00783">
    <property type="entry name" value="MINTRINSICP"/>
</dbReference>
<dbReference type="SUPFAM" id="SSF81338">
    <property type="entry name" value="Aquaporin-like"/>
    <property type="match status" value="1"/>
</dbReference>
<dbReference type="PROSITE" id="PS00221">
    <property type="entry name" value="MIP"/>
    <property type="match status" value="1"/>
</dbReference>
<name>AQP4_NOTAL</name>
<accession>Q5I4F9</accession>
<organism>
    <name type="scientific">Notomys alexis</name>
    <name type="common">Spinifex hopping mouse</name>
    <dbReference type="NCBI Taxonomy" id="184396"/>
    <lineage>
        <taxon>Eukaryota</taxon>
        <taxon>Metazoa</taxon>
        <taxon>Chordata</taxon>
        <taxon>Craniata</taxon>
        <taxon>Vertebrata</taxon>
        <taxon>Euteleostomi</taxon>
        <taxon>Mammalia</taxon>
        <taxon>Eutheria</taxon>
        <taxon>Euarchontoglires</taxon>
        <taxon>Glires</taxon>
        <taxon>Rodentia</taxon>
        <taxon>Myomorpha</taxon>
        <taxon>Muroidea</taxon>
        <taxon>Muridae</taxon>
        <taxon>Murinae</taxon>
        <taxon>Notomys</taxon>
    </lineage>
</organism>